<organism>
    <name type="scientific">Shewanella loihica (strain ATCC BAA-1088 / PV-4)</name>
    <dbReference type="NCBI Taxonomy" id="323850"/>
    <lineage>
        <taxon>Bacteria</taxon>
        <taxon>Pseudomonadati</taxon>
        <taxon>Pseudomonadota</taxon>
        <taxon>Gammaproteobacteria</taxon>
        <taxon>Alteromonadales</taxon>
        <taxon>Shewanellaceae</taxon>
        <taxon>Shewanella</taxon>
    </lineage>
</organism>
<protein>
    <recommendedName>
        <fullName evidence="1">UPF0761 membrane protein Shew_3545</fullName>
    </recommendedName>
</protein>
<sequence>MINKIDVSLLRSIMLGIWQFMIHLKQRITEDQINMRAGHLAYVTLLSLVPMVAVTMSMLSAFPVFKGIRSHIETFIYENFIPSAGDSVQMYINEFVANASKGTAVGIGALVVVAILLISNIDKSLNGIWRTTEKRPMVVSFSMYWMVLTLGPVLMGASLVATSYVVSLKLFSGTDLSGVVPLLVERLPMFFSVATFLLIYMVVPNTKVKFFHALLGAIVAALLFELGKKGFALYLTEFPAYEAIYGALATIPILFMWVYLSWIIVLIGAEITAAMPEYLDKRLMDLVNKELADDESEIHLDEHKR</sequence>
<evidence type="ECO:0000255" key="1">
    <source>
        <dbReference type="HAMAP-Rule" id="MF_00672"/>
    </source>
</evidence>
<evidence type="ECO:0000305" key="2"/>
<reference key="1">
    <citation type="submission" date="2007-03" db="EMBL/GenBank/DDBJ databases">
        <title>Complete sequence of Shewanella loihica PV-4.</title>
        <authorList>
            <consortium name="US DOE Joint Genome Institute"/>
            <person name="Copeland A."/>
            <person name="Lucas S."/>
            <person name="Lapidus A."/>
            <person name="Barry K."/>
            <person name="Detter J.C."/>
            <person name="Glavina del Rio T."/>
            <person name="Hammon N."/>
            <person name="Israni S."/>
            <person name="Dalin E."/>
            <person name="Tice H."/>
            <person name="Pitluck S."/>
            <person name="Chain P."/>
            <person name="Malfatti S."/>
            <person name="Shin M."/>
            <person name="Vergez L."/>
            <person name="Schmutz J."/>
            <person name="Larimer F."/>
            <person name="Land M."/>
            <person name="Hauser L."/>
            <person name="Kyrpides N."/>
            <person name="Mikhailova N."/>
            <person name="Romine M.F."/>
            <person name="Serres G."/>
            <person name="Fredrickson J."/>
            <person name="Tiedje J."/>
            <person name="Richardson P."/>
        </authorList>
    </citation>
    <scope>NUCLEOTIDE SEQUENCE [LARGE SCALE GENOMIC DNA]</scope>
    <source>
        <strain>ATCC BAA-1088 / PV-4</strain>
    </source>
</reference>
<gene>
    <name type="ordered locus">Shew_3545</name>
</gene>
<dbReference type="EMBL" id="CP000606">
    <property type="protein sequence ID" value="ABO25411.1"/>
    <property type="status" value="ALT_INIT"/>
    <property type="molecule type" value="Genomic_DNA"/>
</dbReference>
<dbReference type="STRING" id="323850.Shew_3545"/>
<dbReference type="KEGG" id="slo:Shew_3545"/>
<dbReference type="eggNOG" id="COG1295">
    <property type="taxonomic scope" value="Bacteria"/>
</dbReference>
<dbReference type="HOGENOM" id="CLU_032288_0_0_6"/>
<dbReference type="OrthoDB" id="9808671at2"/>
<dbReference type="Proteomes" id="UP000001558">
    <property type="component" value="Chromosome"/>
</dbReference>
<dbReference type="GO" id="GO:0005886">
    <property type="term" value="C:plasma membrane"/>
    <property type="evidence" value="ECO:0007669"/>
    <property type="project" value="UniProtKB-SubCell"/>
</dbReference>
<dbReference type="HAMAP" id="MF_00672">
    <property type="entry name" value="UPF0761"/>
    <property type="match status" value="1"/>
</dbReference>
<dbReference type="InterPro" id="IPR023679">
    <property type="entry name" value="UPF0761_bac"/>
</dbReference>
<dbReference type="InterPro" id="IPR017039">
    <property type="entry name" value="Virul_fac_BrkB"/>
</dbReference>
<dbReference type="NCBIfam" id="NF002457">
    <property type="entry name" value="PRK01637.1"/>
    <property type="match status" value="1"/>
</dbReference>
<dbReference type="NCBIfam" id="TIGR00765">
    <property type="entry name" value="yihY_not_rbn"/>
    <property type="match status" value="1"/>
</dbReference>
<dbReference type="PANTHER" id="PTHR30213">
    <property type="entry name" value="INNER MEMBRANE PROTEIN YHJD"/>
    <property type="match status" value="1"/>
</dbReference>
<dbReference type="PANTHER" id="PTHR30213:SF0">
    <property type="entry name" value="UPF0761 MEMBRANE PROTEIN YIHY"/>
    <property type="match status" value="1"/>
</dbReference>
<dbReference type="Pfam" id="PF03631">
    <property type="entry name" value="Virul_fac_BrkB"/>
    <property type="match status" value="1"/>
</dbReference>
<dbReference type="PIRSF" id="PIRSF035875">
    <property type="entry name" value="RNase_BN"/>
    <property type="match status" value="1"/>
</dbReference>
<comment type="subcellular location">
    <subcellularLocation>
        <location evidence="1">Cell inner membrane</location>
        <topology evidence="1">Multi-pass membrane protein</topology>
    </subcellularLocation>
</comment>
<comment type="similarity">
    <text evidence="1">Belongs to the UPF0761 family.</text>
</comment>
<comment type="sequence caution" evidence="2">
    <conflict type="erroneous initiation">
        <sequence resource="EMBL-CDS" id="ABO25411"/>
    </conflict>
</comment>
<keyword id="KW-0997">Cell inner membrane</keyword>
<keyword id="KW-1003">Cell membrane</keyword>
<keyword id="KW-0472">Membrane</keyword>
<keyword id="KW-1185">Reference proteome</keyword>
<keyword id="KW-0812">Transmembrane</keyword>
<keyword id="KW-1133">Transmembrane helix</keyword>
<feature type="chain" id="PRO_0000391056" description="UPF0761 membrane protein Shew_3545">
    <location>
        <begin position="1"/>
        <end position="305"/>
    </location>
</feature>
<feature type="transmembrane region" description="Helical" evidence="1">
    <location>
        <begin position="45"/>
        <end position="65"/>
    </location>
</feature>
<feature type="transmembrane region" description="Helical" evidence="1">
    <location>
        <begin position="102"/>
        <end position="122"/>
    </location>
</feature>
<feature type="transmembrane region" description="Helical" evidence="1">
    <location>
        <begin position="137"/>
        <end position="157"/>
    </location>
</feature>
<feature type="transmembrane region" description="Helical" evidence="1">
    <location>
        <begin position="179"/>
        <end position="199"/>
    </location>
</feature>
<feature type="transmembrane region" description="Helical" evidence="1">
    <location>
        <begin position="213"/>
        <end position="233"/>
    </location>
</feature>
<feature type="transmembrane region" description="Helical" evidence="1">
    <location>
        <begin position="247"/>
        <end position="267"/>
    </location>
</feature>
<accession>A3QIW3</accession>
<proteinExistence type="inferred from homology"/>
<name>Y3545_SHELP</name>